<evidence type="ECO:0000250" key="1"/>
<evidence type="ECO:0000305" key="2"/>
<feature type="chain" id="PRO_0000152375" description="Imidazole glycerol phosphate synthase subunit HisH">
    <location>
        <begin position="1"/>
        <end position="196"/>
    </location>
</feature>
<feature type="domain" description="Glutamine amidotransferase type-1">
    <location>
        <begin position="2"/>
        <end position="196"/>
    </location>
</feature>
<feature type="active site" description="Nucleophile" evidence="1">
    <location>
        <position position="77"/>
    </location>
</feature>
<feature type="active site" evidence="1">
    <location>
        <position position="178"/>
    </location>
</feature>
<feature type="active site" evidence="1">
    <location>
        <position position="180"/>
    </location>
</feature>
<feature type="sequence conflict" description="In Ref. 1; BAA77742." evidence="2" ref="1">
    <original>G</original>
    <variation>D</variation>
    <location>
        <position position="7"/>
    </location>
</feature>
<sequence length="196" mass="21595">MNVVILGTGCANLNSVKSAIARHGYEPKVSRDPDVVLLADKLFLPGVGTAQAAMDQVRERELFDLIKACTQPVLGICLGMQLLGRRSEESNGVDLLGIIDEDVPKMTDFGLPLPHMGWNRVYPQAGNRLFQGIEDGAYFYFVHSYAMPVNPWTIAQCNYGEPFTAAVQKDNFYGVQFHPERSGAAGAKLLKNFLEM</sequence>
<keyword id="KW-0028">Amino-acid biosynthesis</keyword>
<keyword id="KW-0963">Cytoplasm</keyword>
<keyword id="KW-0315">Glutamine amidotransferase</keyword>
<keyword id="KW-0368">Histidine biosynthesis</keyword>
<keyword id="KW-0378">Hydrolase</keyword>
<keyword id="KW-0456">Lyase</keyword>
<keyword id="KW-1185">Reference proteome</keyword>
<organism>
    <name type="scientific">Escherichia coli O157:H7</name>
    <dbReference type="NCBI Taxonomy" id="83334"/>
    <lineage>
        <taxon>Bacteria</taxon>
        <taxon>Pseudomonadati</taxon>
        <taxon>Pseudomonadota</taxon>
        <taxon>Gammaproteobacteria</taxon>
        <taxon>Enterobacterales</taxon>
        <taxon>Enterobacteriaceae</taxon>
        <taxon>Escherichia</taxon>
    </lineage>
</organism>
<accession>P58237</accession>
<gene>
    <name type="primary">hisH</name>
    <name type="ordered locus">Z3185</name>
    <name type="ordered locus">ECs2824</name>
</gene>
<name>HIS5_ECO57</name>
<proteinExistence type="inferred from homology"/>
<reference key="1">
    <citation type="journal article" date="1999" name="Microb. Pathog.">
        <title>Analysis of the genes responsible for the O-antigen synthesis in enterohaemorrhagic Escherichia coli O157.</title>
        <authorList>
            <person name="Shimizu T."/>
            <person name="Yamasaki S."/>
            <person name="Tsukamoto T."/>
            <person name="Takeda Y."/>
        </authorList>
    </citation>
    <scope>NUCLEOTIDE SEQUENCE [GENOMIC DNA]</scope>
    <source>
        <strain>O157:H- / 184 / EHEC</strain>
    </source>
</reference>
<reference key="2">
    <citation type="journal article" date="2001" name="Nature">
        <title>Genome sequence of enterohaemorrhagic Escherichia coli O157:H7.</title>
        <authorList>
            <person name="Perna N.T."/>
            <person name="Plunkett G. III"/>
            <person name="Burland V."/>
            <person name="Mau B."/>
            <person name="Glasner J.D."/>
            <person name="Rose D.J."/>
            <person name="Mayhew G.F."/>
            <person name="Evans P.S."/>
            <person name="Gregor J."/>
            <person name="Kirkpatrick H.A."/>
            <person name="Posfai G."/>
            <person name="Hackett J."/>
            <person name="Klink S."/>
            <person name="Boutin A."/>
            <person name="Shao Y."/>
            <person name="Miller L."/>
            <person name="Grotbeck E.J."/>
            <person name="Davis N.W."/>
            <person name="Lim A."/>
            <person name="Dimalanta E.T."/>
            <person name="Potamousis K."/>
            <person name="Apodaca J."/>
            <person name="Anantharaman T.S."/>
            <person name="Lin J."/>
            <person name="Yen G."/>
            <person name="Schwartz D.C."/>
            <person name="Welch R.A."/>
            <person name="Blattner F.R."/>
        </authorList>
    </citation>
    <scope>NUCLEOTIDE SEQUENCE [LARGE SCALE GENOMIC DNA]</scope>
    <source>
        <strain>O157:H7 / EDL933 / ATCC 700927 / EHEC</strain>
    </source>
</reference>
<reference key="3">
    <citation type="journal article" date="2001" name="DNA Res.">
        <title>Complete genome sequence of enterohemorrhagic Escherichia coli O157:H7 and genomic comparison with a laboratory strain K-12.</title>
        <authorList>
            <person name="Hayashi T."/>
            <person name="Makino K."/>
            <person name="Ohnishi M."/>
            <person name="Kurokawa K."/>
            <person name="Ishii K."/>
            <person name="Yokoyama K."/>
            <person name="Han C.-G."/>
            <person name="Ohtsubo E."/>
            <person name="Nakayama K."/>
            <person name="Murata T."/>
            <person name="Tanaka M."/>
            <person name="Tobe T."/>
            <person name="Iida T."/>
            <person name="Takami H."/>
            <person name="Honda T."/>
            <person name="Sasakawa C."/>
            <person name="Ogasawara N."/>
            <person name="Yasunaga T."/>
            <person name="Kuhara S."/>
            <person name="Shiba T."/>
            <person name="Hattori M."/>
            <person name="Shinagawa H."/>
        </authorList>
    </citation>
    <scope>NUCLEOTIDE SEQUENCE [LARGE SCALE GENOMIC DNA]</scope>
    <source>
        <strain>O157:H7 / Sakai / RIMD 0509952 / EHEC</strain>
    </source>
</reference>
<dbReference type="EC" id="4.3.2.10"/>
<dbReference type="EC" id="3.5.1.2"/>
<dbReference type="EMBL" id="AB008676">
    <property type="protein sequence ID" value="BAA77742.1"/>
    <property type="molecule type" value="Genomic_DNA"/>
</dbReference>
<dbReference type="EMBL" id="AE005174">
    <property type="protein sequence ID" value="AAG57082.1"/>
    <property type="molecule type" value="Genomic_DNA"/>
</dbReference>
<dbReference type="EMBL" id="BA000007">
    <property type="protein sequence ID" value="BAB36247.1"/>
    <property type="molecule type" value="Genomic_DNA"/>
</dbReference>
<dbReference type="PIR" id="F85827">
    <property type="entry name" value="F85827"/>
</dbReference>
<dbReference type="PIR" id="H90981">
    <property type="entry name" value="H90981"/>
</dbReference>
<dbReference type="RefSeq" id="NP_310851.1">
    <property type="nucleotide sequence ID" value="NC_002695.1"/>
</dbReference>
<dbReference type="RefSeq" id="WP_001103595.1">
    <property type="nucleotide sequence ID" value="NZ_SDVX01000004.1"/>
</dbReference>
<dbReference type="SMR" id="P58237"/>
<dbReference type="STRING" id="155864.Z3185"/>
<dbReference type="MEROPS" id="C26.965"/>
<dbReference type="GeneID" id="913853"/>
<dbReference type="KEGG" id="ece:Z3185"/>
<dbReference type="KEGG" id="ecs:ECs_2824"/>
<dbReference type="PATRIC" id="fig|386585.9.peg.2959"/>
<dbReference type="eggNOG" id="COG0118">
    <property type="taxonomic scope" value="Bacteria"/>
</dbReference>
<dbReference type="HOGENOM" id="CLU_071837_0_0_6"/>
<dbReference type="UniPathway" id="UPA00031">
    <property type="reaction ID" value="UER00010"/>
</dbReference>
<dbReference type="Proteomes" id="UP000000558">
    <property type="component" value="Chromosome"/>
</dbReference>
<dbReference type="Proteomes" id="UP000002519">
    <property type="component" value="Chromosome"/>
</dbReference>
<dbReference type="GO" id="GO:0005737">
    <property type="term" value="C:cytoplasm"/>
    <property type="evidence" value="ECO:0007669"/>
    <property type="project" value="UniProtKB-SubCell"/>
</dbReference>
<dbReference type="GO" id="GO:0004359">
    <property type="term" value="F:glutaminase activity"/>
    <property type="evidence" value="ECO:0007669"/>
    <property type="project" value="UniProtKB-EC"/>
</dbReference>
<dbReference type="GO" id="GO:0000107">
    <property type="term" value="F:imidazoleglycerol-phosphate synthase activity"/>
    <property type="evidence" value="ECO:0007669"/>
    <property type="project" value="UniProtKB-UniRule"/>
</dbReference>
<dbReference type="GO" id="GO:0016829">
    <property type="term" value="F:lyase activity"/>
    <property type="evidence" value="ECO:0007669"/>
    <property type="project" value="UniProtKB-KW"/>
</dbReference>
<dbReference type="GO" id="GO:0000105">
    <property type="term" value="P:L-histidine biosynthetic process"/>
    <property type="evidence" value="ECO:0007669"/>
    <property type="project" value="UniProtKB-UniRule"/>
</dbReference>
<dbReference type="CDD" id="cd01748">
    <property type="entry name" value="GATase1_IGP_Synthase"/>
    <property type="match status" value="1"/>
</dbReference>
<dbReference type="FunFam" id="3.40.50.880:FF:000009">
    <property type="entry name" value="Imidazole glycerol phosphate synthase subunit HisH"/>
    <property type="match status" value="1"/>
</dbReference>
<dbReference type="Gene3D" id="3.40.50.880">
    <property type="match status" value="1"/>
</dbReference>
<dbReference type="HAMAP" id="MF_00278">
    <property type="entry name" value="HisH"/>
    <property type="match status" value="1"/>
</dbReference>
<dbReference type="InterPro" id="IPR029062">
    <property type="entry name" value="Class_I_gatase-like"/>
</dbReference>
<dbReference type="InterPro" id="IPR017926">
    <property type="entry name" value="GATASE"/>
</dbReference>
<dbReference type="InterPro" id="IPR010139">
    <property type="entry name" value="Imidazole-glycPsynth_HisH"/>
</dbReference>
<dbReference type="NCBIfam" id="TIGR01855">
    <property type="entry name" value="IMP_synth_hisH"/>
    <property type="match status" value="1"/>
</dbReference>
<dbReference type="PANTHER" id="PTHR42701">
    <property type="entry name" value="IMIDAZOLE GLYCEROL PHOSPHATE SYNTHASE SUBUNIT HISH"/>
    <property type="match status" value="1"/>
</dbReference>
<dbReference type="PANTHER" id="PTHR42701:SF1">
    <property type="entry name" value="IMIDAZOLE GLYCEROL PHOSPHATE SYNTHASE SUBUNIT HISH"/>
    <property type="match status" value="1"/>
</dbReference>
<dbReference type="Pfam" id="PF00117">
    <property type="entry name" value="GATase"/>
    <property type="match status" value="1"/>
</dbReference>
<dbReference type="PIRSF" id="PIRSF000495">
    <property type="entry name" value="Amidotransf_hisH"/>
    <property type="match status" value="1"/>
</dbReference>
<dbReference type="PRINTS" id="PR00096">
    <property type="entry name" value="GATASE"/>
</dbReference>
<dbReference type="SUPFAM" id="SSF52317">
    <property type="entry name" value="Class I glutamine amidotransferase-like"/>
    <property type="match status" value="1"/>
</dbReference>
<dbReference type="PROSITE" id="PS51273">
    <property type="entry name" value="GATASE_TYPE_1"/>
    <property type="match status" value="1"/>
</dbReference>
<comment type="function">
    <text evidence="1">IGPS catalyzes the conversion of PRFAR and glutamine to IGP, AICAR and glutamate. The HisH subunit catalyzes the hydrolysis of glutamine to glutamate and ammonia as part of the synthesis of IGP and AICAR. The resulting ammonia molecule is channeled to the active site of HisF (By similarity).</text>
</comment>
<comment type="catalytic activity">
    <reaction>
        <text>5-[(5-phospho-1-deoxy-D-ribulos-1-ylimino)methylamino]-1-(5-phospho-beta-D-ribosyl)imidazole-4-carboxamide + L-glutamine = D-erythro-1-(imidazol-4-yl)glycerol 3-phosphate + 5-amino-1-(5-phospho-beta-D-ribosyl)imidazole-4-carboxamide + L-glutamate + H(+)</text>
        <dbReference type="Rhea" id="RHEA:24793"/>
        <dbReference type="ChEBI" id="CHEBI:15378"/>
        <dbReference type="ChEBI" id="CHEBI:29985"/>
        <dbReference type="ChEBI" id="CHEBI:58278"/>
        <dbReference type="ChEBI" id="CHEBI:58359"/>
        <dbReference type="ChEBI" id="CHEBI:58475"/>
        <dbReference type="ChEBI" id="CHEBI:58525"/>
        <dbReference type="EC" id="4.3.2.10"/>
    </reaction>
</comment>
<comment type="catalytic activity">
    <reaction>
        <text>L-glutamine + H2O = L-glutamate + NH4(+)</text>
        <dbReference type="Rhea" id="RHEA:15889"/>
        <dbReference type="ChEBI" id="CHEBI:15377"/>
        <dbReference type="ChEBI" id="CHEBI:28938"/>
        <dbReference type="ChEBI" id="CHEBI:29985"/>
        <dbReference type="ChEBI" id="CHEBI:58359"/>
        <dbReference type="EC" id="3.5.1.2"/>
    </reaction>
</comment>
<comment type="pathway">
    <text>Amino-acid biosynthesis; L-histidine biosynthesis; L-histidine from 5-phospho-alpha-D-ribose 1-diphosphate: step 5/9.</text>
</comment>
<comment type="subunit">
    <text evidence="1">Heterodimer of HisH and HisF.</text>
</comment>
<comment type="subcellular location">
    <subcellularLocation>
        <location evidence="1">Cytoplasm</location>
    </subcellularLocation>
</comment>
<protein>
    <recommendedName>
        <fullName>Imidazole glycerol phosphate synthase subunit HisH</fullName>
        <ecNumber>4.3.2.10</ecNumber>
    </recommendedName>
    <alternativeName>
        <fullName>IGP synthase glutaminase subunit</fullName>
        <ecNumber>3.5.1.2</ecNumber>
    </alternativeName>
    <alternativeName>
        <fullName>IGP synthase subunit HisH</fullName>
    </alternativeName>
    <alternativeName>
        <fullName>ImGP synthase subunit HisH</fullName>
        <shortName>IGPS subunit HisH</shortName>
    </alternativeName>
</protein>